<name>PLYC_BACLD</name>
<accession>Q65EF5</accession>
<accession>Q62PX3</accession>
<proteinExistence type="inferred from homology"/>
<organism>
    <name type="scientific">Bacillus licheniformis (strain ATCC 14580 / DSM 13 / JCM 2505 / CCUG 7422 / NBRC 12200 / NCIMB 9375 / NCTC 10341 / NRRL NRS-1264 / Gibson 46)</name>
    <dbReference type="NCBI Taxonomy" id="279010"/>
    <lineage>
        <taxon>Bacteria</taxon>
        <taxon>Bacillati</taxon>
        <taxon>Bacillota</taxon>
        <taxon>Bacilli</taxon>
        <taxon>Bacillales</taxon>
        <taxon>Bacillaceae</taxon>
        <taxon>Bacillus</taxon>
    </lineage>
</organism>
<reference key="1">
    <citation type="journal article" date="2004" name="J. Mol. Microbiol. Biotechnol.">
        <title>The complete genome sequence of Bacillus licheniformis DSM13, an organism with great industrial potential.</title>
        <authorList>
            <person name="Veith B."/>
            <person name="Herzberg C."/>
            <person name="Steckel S."/>
            <person name="Feesche J."/>
            <person name="Maurer K.H."/>
            <person name="Ehrenreich P."/>
            <person name="Baeumer S."/>
            <person name="Henne A."/>
            <person name="Liesegang H."/>
            <person name="Merkl R."/>
            <person name="Ehrenreich A."/>
            <person name="Gottschalk G."/>
        </authorList>
    </citation>
    <scope>NUCLEOTIDE SEQUENCE [LARGE SCALE GENOMIC DNA]</scope>
    <source>
        <strain>ATCC 14580 / DSM 13 / JCM 2505 / CCUG 7422 / NBRC 12200 / NCIMB 9375 / NCTC 10341 / NRRL NRS-1264 / Gibson 46</strain>
    </source>
</reference>
<reference key="2">
    <citation type="journal article" date="2004" name="Genome Biol.">
        <title>Complete genome sequence of the industrial bacterium Bacillus licheniformis and comparisons with closely related Bacillus species.</title>
        <authorList>
            <person name="Rey M.W."/>
            <person name="Ramaiya P."/>
            <person name="Nelson B.A."/>
            <person name="Brody-Karpin S.D."/>
            <person name="Zaretsky E.J."/>
            <person name="Tang M."/>
            <person name="Lopez de Leon A."/>
            <person name="Xiang H."/>
            <person name="Gusti V."/>
            <person name="Clausen I.G."/>
            <person name="Olsen P.B."/>
            <person name="Rasmussen M.D."/>
            <person name="Andersen J.T."/>
            <person name="Joergensen P.L."/>
            <person name="Larsen T.S."/>
            <person name="Sorokin A."/>
            <person name="Bolotin A."/>
            <person name="Lapidus A."/>
            <person name="Galleron N."/>
            <person name="Ehrlich S.D."/>
            <person name="Berka R.M."/>
        </authorList>
    </citation>
    <scope>NUCLEOTIDE SEQUENCE [LARGE SCALE GENOMIC DNA]</scope>
    <source>
        <strain>ATCC 14580 / DSM 13 / JCM 2505 / CCUG 7422 / NBRC 12200 / NCIMB 9375 / NCTC 10341 / NRRL NRS-1264 / Gibson 46</strain>
    </source>
</reference>
<keyword id="KW-0106">Calcium</keyword>
<keyword id="KW-0456">Lyase</keyword>
<keyword id="KW-0479">Metal-binding</keyword>
<keyword id="KW-1185">Reference proteome</keyword>
<keyword id="KW-0964">Secreted</keyword>
<keyword id="KW-0732">Signal</keyword>
<sequence>MKRLAGTVILSGLLVCGFGQALPEKALAAEVVHKTIVVEKGQTYDGKGKRLIAGPELGDGSQREDQKPIFKVEDGATLKNVVLGAPAADGVHTYGNASINNVVWEDVGEDALTVKSEGSVTINGGSARLAADKIFQINKASTFTVKNFTADQGGKFIRQLGGSTFKAVVNIDNCTITNMKEAIFRTDSSTSSVTMTNTRYSKVGQKWIGVKHATERNNHEF</sequence>
<protein>
    <recommendedName>
        <fullName>Pectate lyase C</fullName>
        <ecNumber>4.2.2.2</ecNumber>
    </recommendedName>
    <alternativeName>
        <fullName>Pectin lyase</fullName>
        <ecNumber>4.2.2.10</ecNumber>
    </alternativeName>
</protein>
<evidence type="ECO:0000250" key="1"/>
<evidence type="ECO:0000255" key="2"/>
<evidence type="ECO:0000305" key="3"/>
<dbReference type="EC" id="4.2.2.2"/>
<dbReference type="EC" id="4.2.2.10"/>
<dbReference type="EMBL" id="AE017333">
    <property type="protein sequence ID" value="AAU42559.1"/>
    <property type="status" value="ALT_INIT"/>
    <property type="molecule type" value="Genomic_DNA"/>
</dbReference>
<dbReference type="EMBL" id="CP000002">
    <property type="protein sequence ID" value="AAU25188.1"/>
    <property type="molecule type" value="Genomic_DNA"/>
</dbReference>
<dbReference type="SMR" id="Q65EF5"/>
<dbReference type="STRING" id="279010.BL03597"/>
<dbReference type="CAZy" id="PL3">
    <property type="family name" value="Polysaccharide Lyase Family 3"/>
</dbReference>
<dbReference type="KEGG" id="bld:BLi03741"/>
<dbReference type="KEGG" id="bli:BL03597"/>
<dbReference type="PATRIC" id="fig|279010.13.peg.3806"/>
<dbReference type="eggNOG" id="COG5297">
    <property type="taxonomic scope" value="Bacteria"/>
</dbReference>
<dbReference type="HOGENOM" id="CLU_044863_3_1_9"/>
<dbReference type="UniPathway" id="UPA00545">
    <property type="reaction ID" value="UER00824"/>
</dbReference>
<dbReference type="Proteomes" id="UP000000606">
    <property type="component" value="Chromosome"/>
</dbReference>
<dbReference type="GO" id="GO:0005576">
    <property type="term" value="C:extracellular region"/>
    <property type="evidence" value="ECO:0007669"/>
    <property type="project" value="UniProtKB-SubCell"/>
</dbReference>
<dbReference type="GO" id="GO:0046872">
    <property type="term" value="F:metal ion binding"/>
    <property type="evidence" value="ECO:0007669"/>
    <property type="project" value="UniProtKB-KW"/>
</dbReference>
<dbReference type="GO" id="GO:0030570">
    <property type="term" value="F:pectate lyase activity"/>
    <property type="evidence" value="ECO:0007669"/>
    <property type="project" value="UniProtKB-EC"/>
</dbReference>
<dbReference type="GO" id="GO:0047490">
    <property type="term" value="F:pectin lyase activity"/>
    <property type="evidence" value="ECO:0007669"/>
    <property type="project" value="UniProtKB-EC"/>
</dbReference>
<dbReference type="GO" id="GO:0045490">
    <property type="term" value="P:pectin catabolic process"/>
    <property type="evidence" value="ECO:0007669"/>
    <property type="project" value="UniProtKB-UniPathway"/>
</dbReference>
<dbReference type="Gene3D" id="2.160.20.10">
    <property type="entry name" value="Single-stranded right-handed beta-helix, Pectin lyase-like"/>
    <property type="match status" value="1"/>
</dbReference>
<dbReference type="InterPro" id="IPR004898">
    <property type="entry name" value="Pectate_lyase_PlyH/PlyE-like"/>
</dbReference>
<dbReference type="InterPro" id="IPR012334">
    <property type="entry name" value="Pectin_lyas_fold"/>
</dbReference>
<dbReference type="InterPro" id="IPR011050">
    <property type="entry name" value="Pectin_lyase_fold/virulence"/>
</dbReference>
<dbReference type="PANTHER" id="PTHR33407">
    <property type="entry name" value="PECTATE LYASE F-RELATED"/>
    <property type="match status" value="1"/>
</dbReference>
<dbReference type="PANTHER" id="PTHR33407:SF9">
    <property type="entry name" value="PECTATE LYASE F-RELATED"/>
    <property type="match status" value="1"/>
</dbReference>
<dbReference type="Pfam" id="PF03211">
    <property type="entry name" value="Pectate_lyase"/>
    <property type="match status" value="1"/>
</dbReference>
<dbReference type="SUPFAM" id="SSF51126">
    <property type="entry name" value="Pectin lyase-like"/>
    <property type="match status" value="1"/>
</dbReference>
<feature type="signal peptide" evidence="2">
    <location>
        <begin position="1"/>
        <end position="28"/>
    </location>
</feature>
<feature type="chain" id="PRO_0000233103" description="Pectate lyase C">
    <location>
        <begin position="29"/>
        <end position="221"/>
    </location>
</feature>
<gene>
    <name type="primary">pelC</name>
    <name type="synonym">yvpA</name>
    <name type="ordered locus">BLi03741</name>
    <name type="ordered locus">BL03597</name>
</gene>
<comment type="function">
    <text evidence="1">Catalyzes the depolymerization of both polygalacturonate and pectins of methyl esterification degree from 22 to 89%, with an endo mode of action. In contrast to the majority of pectate lyases, displays high activity on highly methylated pectins (By similarity).</text>
</comment>
<comment type="catalytic activity">
    <reaction>
        <text>Eliminative cleavage of (1-&gt;4)-alpha-D-galacturonan to give oligosaccharides with 4-deoxy-alpha-D-galact-4-enuronosyl groups at their non-reducing ends.</text>
        <dbReference type="EC" id="4.2.2.2"/>
    </reaction>
</comment>
<comment type="catalytic activity">
    <reaction>
        <text>Eliminative cleavage of (1-&gt;4)-alpha-D-galacturonan methyl ester to give oligosaccharides with 4-deoxy-6-O-methyl-alpha-D-galact-4-enuronosyl groups at their non-reducing ends.</text>
        <dbReference type="EC" id="4.2.2.10"/>
    </reaction>
</comment>
<comment type="cofactor">
    <cofactor evidence="1">
        <name>Ca(2+)</name>
        <dbReference type="ChEBI" id="CHEBI:29108"/>
    </cofactor>
    <text evidence="1">Binds 1 Ca(2+) ion per subunit.</text>
</comment>
<comment type="pathway">
    <text>Glycan metabolism; pectin degradation; 2-dehydro-3-deoxy-D-gluconate from pectin: step 2/5.</text>
</comment>
<comment type="subcellular location">
    <subcellularLocation>
        <location evidence="1">Secreted</location>
    </subcellularLocation>
</comment>
<comment type="similarity">
    <text evidence="3">Belongs to the polysaccharide lyase 3 family.</text>
</comment>
<comment type="sequence caution" evidence="3">
    <conflict type="erroneous initiation">
        <sequence resource="EMBL-CDS" id="AAU42559"/>
    </conflict>
</comment>